<evidence type="ECO:0000250" key="1">
    <source>
        <dbReference type="UniProtKB" id="Q9NZS9"/>
    </source>
</evidence>
<evidence type="ECO:0000255" key="2"/>
<evidence type="ECO:0000255" key="3">
    <source>
        <dbReference type="PROSITE-ProRule" id="PRU00175"/>
    </source>
</evidence>
<evidence type="ECO:0000255" key="4">
    <source>
        <dbReference type="PROSITE-ProRule" id="PRU00184"/>
    </source>
</evidence>
<evidence type="ECO:0000256" key="5">
    <source>
        <dbReference type="SAM" id="MobiDB-lite"/>
    </source>
</evidence>
<evidence type="ECO:0000269" key="6">
    <source>
    </source>
</evidence>
<evidence type="ECO:0000303" key="7">
    <source>
    </source>
</evidence>
<evidence type="ECO:0000305" key="8"/>
<evidence type="ECO:0007829" key="9">
    <source>
        <dbReference type="PDB" id="1V85"/>
    </source>
</evidence>
<comment type="function">
    <text evidence="1 6">Membrane-bound E3 ubiquitin ligase that plays a role in several processes including apoptosis regulation or reticulum endoplasmic stress. Has anti-apoptotic activity, both for apoptosis triggered via death-receptors and via mitochondrial factors. Contributes to the dynamic control of IRE1/ERN1 signaling during ER stress by inducing BAX inhibitor 1/TMBIM6 proteasomal degradation. Promotes the activation of TGF-beta signaling by mediating the 'Lys-63'-linked ubiquitination of TGFBR1 which is critical to activate the pathway. Together with NGFR, negatively regulates NF-kappa-B and JNK-related signaling pathways (By similarity). Promotes the proteasome-mediated degradation of PNPLA3, a protein involveld in lipid metabolism (PubMed:38294943).</text>
</comment>
<comment type="catalytic activity">
    <reaction evidence="1">
        <text>S-ubiquitinyl-[E2 ubiquitin-conjugating enzyme]-L-cysteine + [acceptor protein]-L-lysine = [E2 ubiquitin-conjugating enzyme]-L-cysteine + N(6)-ubiquitinyl-[acceptor protein]-L-lysine.</text>
        <dbReference type="EC" id="2.3.2.27"/>
    </reaction>
</comment>
<comment type="subunit">
    <text evidence="1">Interacts with CASP8, BCL2 and BCL2L1 through SAM domain and also with HIP1, IFT57, ESRRBL1 and BCAP31. Interacts with NGFR; this interaction inhibits NF-kappa-B and JNK-related signaling pathways.</text>
</comment>
<comment type="subcellular location">
    <subcellularLocation>
        <location evidence="1">Endoplasmic reticulum membrane</location>
        <topology evidence="1">Multi-pass membrane protein</topology>
    </subcellularLocation>
</comment>
<comment type="alternative products">
    <event type="alternative splicing"/>
    <isoform>
        <id>Q8R079-1</id>
        <name>1</name>
        <sequence type="displayed"/>
    </isoform>
    <isoform>
        <id>Q8R079-2</id>
        <name>2</name>
        <sequence type="described" ref="VSP_016651"/>
    </isoform>
</comment>
<comment type="PTM">
    <text evidence="1">Mediates RING-dependent self-ubiquitination leading to proteasomal degradation.</text>
</comment>
<comment type="disruption phenotype">
    <text evidence="6">Bfar-deleted mice show a twofold higher levels of PNPLA3 protein than in WT animals with no associated changes in PNPLA3 mRNA levels.</text>
</comment>
<sequence length="450" mass="52968">MEEPQKNDLSMREQEEEHPVRSSGPQISVSEFSCHCCYDTLVNPTTLNCGHSFCRHCLALWWMSSKKTECPECREKWEGFPKVNILLRDAIEKLFPDAIRMRVEDIQQNNDVVQSLAAFQKYGNDQNPLAPSTGRVNPQRGGGFFSGVLTALTGVAVILLVYHWRSRESEHGLLVHKAVDKWTMEEVVLWLEQLGPWASLYRDRFLSERVNGRLLLTLTEEEFSRAPYTIENSSHRRVILTELERVRALGVKPPQNLWEYKAVNPGRSLFLLYALKSSPRLGLLYLYLFDYTDCFLPFIHTICPLQENSSGEDIFTKLLDLREPTWKQWREFLVKYSFLPYQLIAEFAWDWLEVHYWTSRFLIVNAVLLSVLELFSFWRIWSRSELKTVPQRMWSHFWKVSTQGLFMAMFWPLIPQFVCNCLFYWALYFNPIINIDLVVKEVRRLETQVL</sequence>
<name>BFAR_MOUSE</name>
<feature type="chain" id="PRO_0000055823" description="Bifunctional apoptosis regulator">
    <location>
        <begin position="1"/>
        <end position="450"/>
    </location>
</feature>
<feature type="topological domain" description="Cytoplasmic" evidence="2">
    <location>
        <begin position="1"/>
        <end position="140"/>
    </location>
</feature>
<feature type="transmembrane region" description="Helical" evidence="2">
    <location>
        <begin position="141"/>
        <end position="161"/>
    </location>
</feature>
<feature type="topological domain" description="Extracellular" evidence="2">
    <location>
        <begin position="162"/>
        <end position="331"/>
    </location>
</feature>
<feature type="transmembrane region" description="Helical" evidence="2">
    <location>
        <begin position="332"/>
        <end position="352"/>
    </location>
</feature>
<feature type="topological domain" description="Cytoplasmic" evidence="2">
    <location>
        <begin position="353"/>
        <end position="360"/>
    </location>
</feature>
<feature type="transmembrane region" description="Helical" evidence="2">
    <location>
        <begin position="361"/>
        <end position="381"/>
    </location>
</feature>
<feature type="topological domain" description="Extracellular" evidence="2">
    <location>
        <begin position="382"/>
        <end position="404"/>
    </location>
</feature>
<feature type="transmembrane region" description="Helical" evidence="2">
    <location>
        <begin position="405"/>
        <end position="425"/>
    </location>
</feature>
<feature type="topological domain" description="Cytoplasmic" evidence="2">
    <location>
        <begin position="426"/>
        <end position="450"/>
    </location>
</feature>
<feature type="domain" description="SAM" evidence="4">
    <location>
        <begin position="182"/>
        <end position="249"/>
    </location>
</feature>
<feature type="zinc finger region" description="RING-type" evidence="3">
    <location>
        <begin position="34"/>
        <end position="74"/>
    </location>
</feature>
<feature type="region of interest" description="Disordered" evidence="5">
    <location>
        <begin position="1"/>
        <end position="25"/>
    </location>
</feature>
<feature type="compositionally biased region" description="Basic and acidic residues" evidence="5">
    <location>
        <begin position="1"/>
        <end position="20"/>
    </location>
</feature>
<feature type="glycosylation site" description="N-linked (GlcNAc...) asparagine" evidence="2">
    <location>
        <position position="232"/>
    </location>
</feature>
<feature type="glycosylation site" description="N-linked (GlcNAc...) asparagine" evidence="2">
    <location>
        <position position="308"/>
    </location>
</feature>
<feature type="splice variant" id="VSP_016651" description="In isoform 2." evidence="7">
    <location>
        <begin position="89"/>
        <end position="213"/>
    </location>
</feature>
<feature type="sequence conflict" description="In Ref. 1; BAB29029." evidence="8" ref="1">
    <original>M</original>
    <variation>T</variation>
    <location>
        <position position="184"/>
    </location>
</feature>
<feature type="helix" evidence="9">
    <location>
        <begin position="173"/>
        <end position="176"/>
    </location>
</feature>
<feature type="helix" evidence="9">
    <location>
        <begin position="179"/>
        <end position="181"/>
    </location>
</feature>
<feature type="helix" evidence="9">
    <location>
        <begin position="184"/>
        <end position="194"/>
    </location>
</feature>
<feature type="helix" evidence="9">
    <location>
        <begin position="196"/>
        <end position="198"/>
    </location>
</feature>
<feature type="helix" evidence="9">
    <location>
        <begin position="199"/>
        <end position="207"/>
    </location>
</feature>
<feature type="helix" evidence="9">
    <location>
        <begin position="212"/>
        <end position="217"/>
    </location>
</feature>
<feature type="helix" evidence="9">
    <location>
        <begin position="220"/>
        <end position="224"/>
    </location>
</feature>
<feature type="turn" evidence="9">
    <location>
        <begin position="226"/>
        <end position="228"/>
    </location>
</feature>
<feature type="helix" evidence="9">
    <location>
        <begin position="233"/>
        <end position="247"/>
    </location>
</feature>
<proteinExistence type="evidence at protein level"/>
<dbReference type="EC" id="2.3.2.27" evidence="1"/>
<dbReference type="EMBL" id="AK013874">
    <property type="protein sequence ID" value="BAB29029.1"/>
    <property type="molecule type" value="mRNA"/>
</dbReference>
<dbReference type="EMBL" id="AK028592">
    <property type="protein sequence ID" value="BAC26022.1"/>
    <property type="molecule type" value="mRNA"/>
</dbReference>
<dbReference type="EMBL" id="BC027221">
    <property type="protein sequence ID" value="AAH27221.1"/>
    <property type="molecule type" value="mRNA"/>
</dbReference>
<dbReference type="CCDS" id="CCDS27966.1">
    <molecule id="Q8R079-1"/>
</dbReference>
<dbReference type="CCDS" id="CCDS49769.1">
    <molecule id="Q8R079-2"/>
</dbReference>
<dbReference type="RefSeq" id="NP_001171023.1">
    <molecule id="Q8R079-2"/>
    <property type="nucleotide sequence ID" value="NM_001177552.1"/>
</dbReference>
<dbReference type="RefSeq" id="NP_080252.1">
    <property type="nucleotide sequence ID" value="NM_025976.5"/>
</dbReference>
<dbReference type="PDB" id="1V85">
    <property type="method" value="NMR"/>
    <property type="chains" value="A=170-247"/>
</dbReference>
<dbReference type="PDBsum" id="1V85"/>
<dbReference type="SMR" id="Q8R079"/>
<dbReference type="BioGRID" id="211952">
    <property type="interactions" value="23"/>
</dbReference>
<dbReference type="FunCoup" id="Q8R079">
    <property type="interactions" value="1820"/>
</dbReference>
<dbReference type="STRING" id="10090.ENSMUSP00000023365"/>
<dbReference type="GlyCosmos" id="Q8R079">
    <property type="glycosylation" value="2 sites, No reported glycans"/>
</dbReference>
<dbReference type="GlyGen" id="Q8R079">
    <property type="glycosylation" value="2 sites, 1 N-linked glycan (1 site)"/>
</dbReference>
<dbReference type="iPTMnet" id="Q8R079"/>
<dbReference type="PhosphoSitePlus" id="Q8R079"/>
<dbReference type="PaxDb" id="10090-ENSMUSP00000023365"/>
<dbReference type="ProteomicsDB" id="273606">
    <molecule id="Q8R079-1"/>
</dbReference>
<dbReference type="ProteomicsDB" id="273607">
    <molecule id="Q8R079-2"/>
</dbReference>
<dbReference type="Pumba" id="Q8R079"/>
<dbReference type="Antibodypedia" id="24873">
    <property type="antibodies" value="211 antibodies from 28 providers"/>
</dbReference>
<dbReference type="DNASU" id="67118"/>
<dbReference type="Ensembl" id="ENSMUST00000069281.8">
    <molecule id="Q8R079-2"/>
    <property type="protein sequence ID" value="ENSMUSP00000063371.8"/>
    <property type="gene ID" value="ENSMUSG00000022684.16"/>
</dbReference>
<dbReference type="GeneID" id="67118"/>
<dbReference type="KEGG" id="mmu:67118"/>
<dbReference type="UCSC" id="uc007ygf.2">
    <molecule id="Q8R079-1"/>
    <property type="organism name" value="mouse"/>
</dbReference>
<dbReference type="UCSC" id="uc007ygg.2">
    <molecule id="Q8R079-2"/>
    <property type="organism name" value="mouse"/>
</dbReference>
<dbReference type="AGR" id="MGI:1914368"/>
<dbReference type="CTD" id="51283"/>
<dbReference type="MGI" id="MGI:1914368">
    <property type="gene designation" value="Bfar"/>
</dbReference>
<dbReference type="VEuPathDB" id="HostDB:ENSMUSG00000022684"/>
<dbReference type="eggNOG" id="KOG4159">
    <property type="taxonomic scope" value="Eukaryota"/>
</dbReference>
<dbReference type="GeneTree" id="ENSGT00390000005386"/>
<dbReference type="HOGENOM" id="CLU_057444_0_0_1"/>
<dbReference type="InParanoid" id="Q8R079"/>
<dbReference type="OrthoDB" id="6105938at2759"/>
<dbReference type="PhylomeDB" id="Q8R079"/>
<dbReference type="TreeFam" id="TF332303"/>
<dbReference type="BioGRID-ORCS" id="67118">
    <property type="hits" value="4 hits in 79 CRISPR screens"/>
</dbReference>
<dbReference type="ChiTaRS" id="Bfar">
    <property type="organism name" value="mouse"/>
</dbReference>
<dbReference type="EvolutionaryTrace" id="Q8R079"/>
<dbReference type="PRO" id="PR:Q8R079"/>
<dbReference type="Proteomes" id="UP000000589">
    <property type="component" value="Chromosome 16"/>
</dbReference>
<dbReference type="RNAct" id="Q8R079">
    <property type="molecule type" value="protein"/>
</dbReference>
<dbReference type="Bgee" id="ENSMUSG00000022684">
    <property type="expression patterns" value="Expressed in myocardium of ventricle and 257 other cell types or tissues"/>
</dbReference>
<dbReference type="ExpressionAtlas" id="Q8R079">
    <property type="expression patterns" value="baseline and differential"/>
</dbReference>
<dbReference type="GO" id="GO:0005789">
    <property type="term" value="C:endoplasmic reticulum membrane"/>
    <property type="evidence" value="ECO:0007669"/>
    <property type="project" value="UniProtKB-SubCell"/>
</dbReference>
<dbReference type="GO" id="GO:0016020">
    <property type="term" value="C:membrane"/>
    <property type="evidence" value="ECO:0000266"/>
    <property type="project" value="MGI"/>
</dbReference>
<dbReference type="GO" id="GO:0016740">
    <property type="term" value="F:transferase activity"/>
    <property type="evidence" value="ECO:0007669"/>
    <property type="project" value="UniProtKB-KW"/>
</dbReference>
<dbReference type="GO" id="GO:0008270">
    <property type="term" value="F:zinc ion binding"/>
    <property type="evidence" value="ECO:0007669"/>
    <property type="project" value="UniProtKB-KW"/>
</dbReference>
<dbReference type="GO" id="GO:0006915">
    <property type="term" value="P:apoptotic process"/>
    <property type="evidence" value="ECO:0007669"/>
    <property type="project" value="UniProtKB-KW"/>
</dbReference>
<dbReference type="GO" id="GO:0043066">
    <property type="term" value="P:negative regulation of apoptotic process"/>
    <property type="evidence" value="ECO:0000266"/>
    <property type="project" value="MGI"/>
</dbReference>
<dbReference type="CDD" id="cd16497">
    <property type="entry name" value="RING-HC_BAR"/>
    <property type="match status" value="1"/>
</dbReference>
<dbReference type="CDD" id="cd09513">
    <property type="entry name" value="SAM_BAR"/>
    <property type="match status" value="1"/>
</dbReference>
<dbReference type="FunFam" id="1.10.150.50:FF:000053">
    <property type="entry name" value="Bifunctional apoptosis regulator"/>
    <property type="match status" value="1"/>
</dbReference>
<dbReference type="FunFam" id="3.30.40.10:FF:000331">
    <property type="entry name" value="Bifunctional apoptosis regulator"/>
    <property type="match status" value="1"/>
</dbReference>
<dbReference type="Gene3D" id="1.10.150.50">
    <property type="entry name" value="Transcription Factor, Ets-1"/>
    <property type="match status" value="1"/>
</dbReference>
<dbReference type="Gene3D" id="3.30.40.10">
    <property type="entry name" value="Zinc/RING finger domain, C3HC4 (zinc finger)"/>
    <property type="match status" value="1"/>
</dbReference>
<dbReference type="InterPro" id="IPR001660">
    <property type="entry name" value="SAM"/>
</dbReference>
<dbReference type="InterPro" id="IPR013761">
    <property type="entry name" value="SAM/pointed_sf"/>
</dbReference>
<dbReference type="InterPro" id="IPR001841">
    <property type="entry name" value="Znf_RING"/>
</dbReference>
<dbReference type="InterPro" id="IPR013083">
    <property type="entry name" value="Znf_RING/FYVE/PHD"/>
</dbReference>
<dbReference type="InterPro" id="IPR017907">
    <property type="entry name" value="Znf_RING_CS"/>
</dbReference>
<dbReference type="PANTHER" id="PTHR15898">
    <property type="entry name" value="BIFUNCTIONAL APOPTOSIS REGULATOR"/>
    <property type="match status" value="1"/>
</dbReference>
<dbReference type="PANTHER" id="PTHR15898:SF13">
    <property type="entry name" value="BIFUNCTIONAL APOPTOSIS REGULATOR"/>
    <property type="match status" value="1"/>
</dbReference>
<dbReference type="Pfam" id="PF00536">
    <property type="entry name" value="SAM_1"/>
    <property type="match status" value="1"/>
</dbReference>
<dbReference type="Pfam" id="PF15227">
    <property type="entry name" value="zf-C3HC4_4"/>
    <property type="match status" value="1"/>
</dbReference>
<dbReference type="SMART" id="SM00184">
    <property type="entry name" value="RING"/>
    <property type="match status" value="1"/>
</dbReference>
<dbReference type="SMART" id="SM00454">
    <property type="entry name" value="SAM"/>
    <property type="match status" value="1"/>
</dbReference>
<dbReference type="SUPFAM" id="SSF57850">
    <property type="entry name" value="RING/U-box"/>
    <property type="match status" value="1"/>
</dbReference>
<dbReference type="SUPFAM" id="SSF47769">
    <property type="entry name" value="SAM/Pointed domain"/>
    <property type="match status" value="1"/>
</dbReference>
<dbReference type="PROSITE" id="PS50105">
    <property type="entry name" value="SAM_DOMAIN"/>
    <property type="match status" value="1"/>
</dbReference>
<dbReference type="PROSITE" id="PS00518">
    <property type="entry name" value="ZF_RING_1"/>
    <property type="match status" value="1"/>
</dbReference>
<dbReference type="PROSITE" id="PS50089">
    <property type="entry name" value="ZF_RING_2"/>
    <property type="match status" value="1"/>
</dbReference>
<gene>
    <name type="primary">Bfar</name>
</gene>
<reference key="1">
    <citation type="journal article" date="2005" name="Science">
        <title>The transcriptional landscape of the mammalian genome.</title>
        <authorList>
            <person name="Carninci P."/>
            <person name="Kasukawa T."/>
            <person name="Katayama S."/>
            <person name="Gough J."/>
            <person name="Frith M.C."/>
            <person name="Maeda N."/>
            <person name="Oyama R."/>
            <person name="Ravasi T."/>
            <person name="Lenhard B."/>
            <person name="Wells C."/>
            <person name="Kodzius R."/>
            <person name="Shimokawa K."/>
            <person name="Bajic V.B."/>
            <person name="Brenner S.E."/>
            <person name="Batalov S."/>
            <person name="Forrest A.R."/>
            <person name="Zavolan M."/>
            <person name="Davis M.J."/>
            <person name="Wilming L.G."/>
            <person name="Aidinis V."/>
            <person name="Allen J.E."/>
            <person name="Ambesi-Impiombato A."/>
            <person name="Apweiler R."/>
            <person name="Aturaliya R.N."/>
            <person name="Bailey T.L."/>
            <person name="Bansal M."/>
            <person name="Baxter L."/>
            <person name="Beisel K.W."/>
            <person name="Bersano T."/>
            <person name="Bono H."/>
            <person name="Chalk A.M."/>
            <person name="Chiu K.P."/>
            <person name="Choudhary V."/>
            <person name="Christoffels A."/>
            <person name="Clutterbuck D.R."/>
            <person name="Crowe M.L."/>
            <person name="Dalla E."/>
            <person name="Dalrymple B.P."/>
            <person name="de Bono B."/>
            <person name="Della Gatta G."/>
            <person name="di Bernardo D."/>
            <person name="Down T."/>
            <person name="Engstrom P."/>
            <person name="Fagiolini M."/>
            <person name="Faulkner G."/>
            <person name="Fletcher C.F."/>
            <person name="Fukushima T."/>
            <person name="Furuno M."/>
            <person name="Futaki S."/>
            <person name="Gariboldi M."/>
            <person name="Georgii-Hemming P."/>
            <person name="Gingeras T.R."/>
            <person name="Gojobori T."/>
            <person name="Green R.E."/>
            <person name="Gustincich S."/>
            <person name="Harbers M."/>
            <person name="Hayashi Y."/>
            <person name="Hensch T.K."/>
            <person name="Hirokawa N."/>
            <person name="Hill D."/>
            <person name="Huminiecki L."/>
            <person name="Iacono M."/>
            <person name="Ikeo K."/>
            <person name="Iwama A."/>
            <person name="Ishikawa T."/>
            <person name="Jakt M."/>
            <person name="Kanapin A."/>
            <person name="Katoh M."/>
            <person name="Kawasawa Y."/>
            <person name="Kelso J."/>
            <person name="Kitamura H."/>
            <person name="Kitano H."/>
            <person name="Kollias G."/>
            <person name="Krishnan S.P."/>
            <person name="Kruger A."/>
            <person name="Kummerfeld S.K."/>
            <person name="Kurochkin I.V."/>
            <person name="Lareau L.F."/>
            <person name="Lazarevic D."/>
            <person name="Lipovich L."/>
            <person name="Liu J."/>
            <person name="Liuni S."/>
            <person name="McWilliam S."/>
            <person name="Madan Babu M."/>
            <person name="Madera M."/>
            <person name="Marchionni L."/>
            <person name="Matsuda H."/>
            <person name="Matsuzawa S."/>
            <person name="Miki H."/>
            <person name="Mignone F."/>
            <person name="Miyake S."/>
            <person name="Morris K."/>
            <person name="Mottagui-Tabar S."/>
            <person name="Mulder N."/>
            <person name="Nakano N."/>
            <person name="Nakauchi H."/>
            <person name="Ng P."/>
            <person name="Nilsson R."/>
            <person name="Nishiguchi S."/>
            <person name="Nishikawa S."/>
            <person name="Nori F."/>
            <person name="Ohara O."/>
            <person name="Okazaki Y."/>
            <person name="Orlando V."/>
            <person name="Pang K.C."/>
            <person name="Pavan W.J."/>
            <person name="Pavesi G."/>
            <person name="Pesole G."/>
            <person name="Petrovsky N."/>
            <person name="Piazza S."/>
            <person name="Reed J."/>
            <person name="Reid J.F."/>
            <person name="Ring B.Z."/>
            <person name="Ringwald M."/>
            <person name="Rost B."/>
            <person name="Ruan Y."/>
            <person name="Salzberg S.L."/>
            <person name="Sandelin A."/>
            <person name="Schneider C."/>
            <person name="Schoenbach C."/>
            <person name="Sekiguchi K."/>
            <person name="Semple C.A."/>
            <person name="Seno S."/>
            <person name="Sessa L."/>
            <person name="Sheng Y."/>
            <person name="Shibata Y."/>
            <person name="Shimada H."/>
            <person name="Shimada K."/>
            <person name="Silva D."/>
            <person name="Sinclair B."/>
            <person name="Sperling S."/>
            <person name="Stupka E."/>
            <person name="Sugiura K."/>
            <person name="Sultana R."/>
            <person name="Takenaka Y."/>
            <person name="Taki K."/>
            <person name="Tammoja K."/>
            <person name="Tan S.L."/>
            <person name="Tang S."/>
            <person name="Taylor M.S."/>
            <person name="Tegner J."/>
            <person name="Teichmann S.A."/>
            <person name="Ueda H.R."/>
            <person name="van Nimwegen E."/>
            <person name="Verardo R."/>
            <person name="Wei C.L."/>
            <person name="Yagi K."/>
            <person name="Yamanishi H."/>
            <person name="Zabarovsky E."/>
            <person name="Zhu S."/>
            <person name="Zimmer A."/>
            <person name="Hide W."/>
            <person name="Bult C."/>
            <person name="Grimmond S.M."/>
            <person name="Teasdale R.D."/>
            <person name="Liu E.T."/>
            <person name="Brusic V."/>
            <person name="Quackenbush J."/>
            <person name="Wahlestedt C."/>
            <person name="Mattick J.S."/>
            <person name="Hume D.A."/>
            <person name="Kai C."/>
            <person name="Sasaki D."/>
            <person name="Tomaru Y."/>
            <person name="Fukuda S."/>
            <person name="Kanamori-Katayama M."/>
            <person name="Suzuki M."/>
            <person name="Aoki J."/>
            <person name="Arakawa T."/>
            <person name="Iida J."/>
            <person name="Imamura K."/>
            <person name="Itoh M."/>
            <person name="Kato T."/>
            <person name="Kawaji H."/>
            <person name="Kawagashira N."/>
            <person name="Kawashima T."/>
            <person name="Kojima M."/>
            <person name="Kondo S."/>
            <person name="Konno H."/>
            <person name="Nakano K."/>
            <person name="Ninomiya N."/>
            <person name="Nishio T."/>
            <person name="Okada M."/>
            <person name="Plessy C."/>
            <person name="Shibata K."/>
            <person name="Shiraki T."/>
            <person name="Suzuki S."/>
            <person name="Tagami M."/>
            <person name="Waki K."/>
            <person name="Watahiki A."/>
            <person name="Okamura-Oho Y."/>
            <person name="Suzuki H."/>
            <person name="Kawai J."/>
            <person name="Hayashizaki Y."/>
        </authorList>
    </citation>
    <scope>NUCLEOTIDE SEQUENCE [LARGE SCALE MRNA] (ISOFORMS 1 AND 2)</scope>
    <source>
        <strain>C57BL/6J</strain>
        <tissue>Head</tissue>
        <tissue>Skin</tissue>
    </source>
</reference>
<reference key="2">
    <citation type="journal article" date="2004" name="Genome Res.">
        <title>The status, quality, and expansion of the NIH full-length cDNA project: the Mammalian Gene Collection (MGC).</title>
        <authorList>
            <consortium name="The MGC Project Team"/>
        </authorList>
    </citation>
    <scope>NUCLEOTIDE SEQUENCE [LARGE SCALE MRNA] (ISOFORM 1)</scope>
    <source>
        <strain>FVB/N</strain>
        <tissue>Liver</tissue>
    </source>
</reference>
<reference key="3">
    <citation type="journal article" date="2024" name="Proc. Natl. Acad. Sci. U.S.A.">
        <title>The ubiquitin E3 ligase BFAR promotes degradation of PNPLA3.</title>
        <authorList>
            <person name="Das A."/>
            <person name="Cheng H."/>
            <person name="Wang Y."/>
            <person name="Kinch L.N."/>
            <person name="Liang G."/>
            <person name="Hong S."/>
            <person name="Hobbs H.H."/>
            <person name="Cohen J.C."/>
        </authorList>
    </citation>
    <scope>FUNCTION</scope>
    <scope>DISRUPTION PHENOTYPE</scope>
</reference>
<reference key="4">
    <citation type="submission" date="2005-01" db="PDB data bank">
        <title>Sterile alpha motif (SAM) domain of mouse bifunctional apoptosis regulator.</title>
        <authorList>
            <consortium name="RIKEN structural genomics initiative (RSGI)"/>
        </authorList>
    </citation>
    <scope>STRUCTURE BY NMR OF 170-247</scope>
</reference>
<organism>
    <name type="scientific">Mus musculus</name>
    <name type="common">Mouse</name>
    <dbReference type="NCBI Taxonomy" id="10090"/>
    <lineage>
        <taxon>Eukaryota</taxon>
        <taxon>Metazoa</taxon>
        <taxon>Chordata</taxon>
        <taxon>Craniata</taxon>
        <taxon>Vertebrata</taxon>
        <taxon>Euteleostomi</taxon>
        <taxon>Mammalia</taxon>
        <taxon>Eutheria</taxon>
        <taxon>Euarchontoglires</taxon>
        <taxon>Glires</taxon>
        <taxon>Rodentia</taxon>
        <taxon>Myomorpha</taxon>
        <taxon>Muroidea</taxon>
        <taxon>Muridae</taxon>
        <taxon>Murinae</taxon>
        <taxon>Mus</taxon>
        <taxon>Mus</taxon>
    </lineage>
</organism>
<accession>Q8R079</accession>
<accession>Q8C1A7</accession>
<accession>Q9CXY3</accession>
<keyword id="KW-0002">3D-structure</keyword>
<keyword id="KW-0025">Alternative splicing</keyword>
<keyword id="KW-0053">Apoptosis</keyword>
<keyword id="KW-0256">Endoplasmic reticulum</keyword>
<keyword id="KW-0325">Glycoprotein</keyword>
<keyword id="KW-0472">Membrane</keyword>
<keyword id="KW-0479">Metal-binding</keyword>
<keyword id="KW-1185">Reference proteome</keyword>
<keyword id="KW-0808">Transferase</keyword>
<keyword id="KW-0812">Transmembrane</keyword>
<keyword id="KW-1133">Transmembrane helix</keyword>
<keyword id="KW-0832">Ubl conjugation</keyword>
<keyword id="KW-0862">Zinc</keyword>
<keyword id="KW-0863">Zinc-finger</keyword>
<protein>
    <recommendedName>
        <fullName>Bifunctional apoptosis regulator</fullName>
        <ecNumber evidence="1">2.3.2.27</ecNumber>
    </recommendedName>
</protein>